<organism>
    <name type="scientific">Cereibacter sphaeroides (strain ATCC 17023 / DSM 158 / JCM 6121 / CCUG 31486 / LMG 2827 / NBRC 12203 / NCIMB 8253 / ATH 2.4.1.)</name>
    <name type="common">Rhodobacter sphaeroides</name>
    <dbReference type="NCBI Taxonomy" id="272943"/>
    <lineage>
        <taxon>Bacteria</taxon>
        <taxon>Pseudomonadati</taxon>
        <taxon>Pseudomonadota</taxon>
        <taxon>Alphaproteobacteria</taxon>
        <taxon>Rhodobacterales</taxon>
        <taxon>Paracoccaceae</taxon>
        <taxon>Cereibacter</taxon>
    </lineage>
</organism>
<protein>
    <recommendedName>
        <fullName evidence="1">Endoribonuclease YbeY</fullName>
        <ecNumber evidence="1">3.1.-.-</ecNumber>
    </recommendedName>
</protein>
<reference key="1">
    <citation type="submission" date="2005-09" db="EMBL/GenBank/DDBJ databases">
        <title>Complete sequence of chromosome 2 of Rhodobacter sphaeroides 2.4.1.</title>
        <authorList>
            <person name="Copeland A."/>
            <person name="Lucas S."/>
            <person name="Lapidus A."/>
            <person name="Barry K."/>
            <person name="Detter J.C."/>
            <person name="Glavina T."/>
            <person name="Hammon N."/>
            <person name="Israni S."/>
            <person name="Pitluck S."/>
            <person name="Richardson P."/>
            <person name="Mackenzie C."/>
            <person name="Choudhary M."/>
            <person name="Larimer F."/>
            <person name="Hauser L.J."/>
            <person name="Land M."/>
            <person name="Donohue T.J."/>
            <person name="Kaplan S."/>
        </authorList>
    </citation>
    <scope>NUCLEOTIDE SEQUENCE [LARGE SCALE GENOMIC DNA]</scope>
    <source>
        <strain>ATCC 17023 / DSM 158 / JCM 6121 / CCUG 31486 / LMG 2827 / NBRC 12203 / NCIMB 8253 / ATH 2.4.1.</strain>
    </source>
</reference>
<keyword id="KW-0963">Cytoplasm</keyword>
<keyword id="KW-0255">Endonuclease</keyword>
<keyword id="KW-0378">Hydrolase</keyword>
<keyword id="KW-0479">Metal-binding</keyword>
<keyword id="KW-0540">Nuclease</keyword>
<keyword id="KW-1185">Reference proteome</keyword>
<keyword id="KW-0690">Ribosome biogenesis</keyword>
<keyword id="KW-0698">rRNA processing</keyword>
<keyword id="KW-0862">Zinc</keyword>
<gene>
    <name evidence="1" type="primary">ybeY</name>
    <name type="ordered locus">RHOS4_36330</name>
    <name type="ORF">RSP_3598</name>
</gene>
<evidence type="ECO:0000255" key="1">
    <source>
        <dbReference type="HAMAP-Rule" id="MF_00009"/>
    </source>
</evidence>
<evidence type="ECO:0000256" key="2">
    <source>
        <dbReference type="SAM" id="MobiDB-lite"/>
    </source>
</evidence>
<accession>Q3IW83</accession>
<dbReference type="EC" id="3.1.-.-" evidence="1"/>
<dbReference type="EMBL" id="CP000144">
    <property type="protein sequence ID" value="ABA81201.1"/>
    <property type="molecule type" value="Genomic_DNA"/>
</dbReference>
<dbReference type="RefSeq" id="WP_011339443.1">
    <property type="nucleotide sequence ID" value="NZ_CP030272.1"/>
</dbReference>
<dbReference type="RefSeq" id="YP_355102.1">
    <property type="nucleotide sequence ID" value="NC_007494.2"/>
</dbReference>
<dbReference type="SMR" id="Q3IW83"/>
<dbReference type="STRING" id="272943.RSP_3598"/>
<dbReference type="EnsemblBacteria" id="ABA81201">
    <property type="protein sequence ID" value="ABA81201"/>
    <property type="gene ID" value="RSP_3598"/>
</dbReference>
<dbReference type="GeneID" id="3722115"/>
<dbReference type="KEGG" id="rsp:RSP_3598"/>
<dbReference type="PATRIC" id="fig|272943.9.peg.4034"/>
<dbReference type="eggNOG" id="COG0319">
    <property type="taxonomic scope" value="Bacteria"/>
</dbReference>
<dbReference type="OrthoDB" id="9807740at2"/>
<dbReference type="PhylomeDB" id="Q3IW83"/>
<dbReference type="Proteomes" id="UP000002703">
    <property type="component" value="Chromosome 2"/>
</dbReference>
<dbReference type="GO" id="GO:0005737">
    <property type="term" value="C:cytoplasm"/>
    <property type="evidence" value="ECO:0007669"/>
    <property type="project" value="UniProtKB-SubCell"/>
</dbReference>
<dbReference type="GO" id="GO:0004222">
    <property type="term" value="F:metalloendopeptidase activity"/>
    <property type="evidence" value="ECO:0007669"/>
    <property type="project" value="InterPro"/>
</dbReference>
<dbReference type="GO" id="GO:0004521">
    <property type="term" value="F:RNA endonuclease activity"/>
    <property type="evidence" value="ECO:0007669"/>
    <property type="project" value="UniProtKB-UniRule"/>
</dbReference>
<dbReference type="GO" id="GO:0008270">
    <property type="term" value="F:zinc ion binding"/>
    <property type="evidence" value="ECO:0007669"/>
    <property type="project" value="UniProtKB-UniRule"/>
</dbReference>
<dbReference type="GO" id="GO:0006364">
    <property type="term" value="P:rRNA processing"/>
    <property type="evidence" value="ECO:0007669"/>
    <property type="project" value="UniProtKB-UniRule"/>
</dbReference>
<dbReference type="Gene3D" id="3.40.390.30">
    <property type="entry name" value="Metalloproteases ('zincins'), catalytic domain"/>
    <property type="match status" value="1"/>
</dbReference>
<dbReference type="HAMAP" id="MF_00009">
    <property type="entry name" value="Endoribonucl_YbeY"/>
    <property type="match status" value="1"/>
</dbReference>
<dbReference type="InterPro" id="IPR023091">
    <property type="entry name" value="MetalPrtase_cat_dom_sf_prd"/>
</dbReference>
<dbReference type="InterPro" id="IPR002036">
    <property type="entry name" value="YbeY"/>
</dbReference>
<dbReference type="InterPro" id="IPR020549">
    <property type="entry name" value="YbeY_CS"/>
</dbReference>
<dbReference type="NCBIfam" id="TIGR00043">
    <property type="entry name" value="rRNA maturation RNase YbeY"/>
    <property type="match status" value="1"/>
</dbReference>
<dbReference type="PANTHER" id="PTHR46986">
    <property type="entry name" value="ENDORIBONUCLEASE YBEY, CHLOROPLASTIC"/>
    <property type="match status" value="1"/>
</dbReference>
<dbReference type="PANTHER" id="PTHR46986:SF1">
    <property type="entry name" value="ENDORIBONUCLEASE YBEY, CHLOROPLASTIC"/>
    <property type="match status" value="1"/>
</dbReference>
<dbReference type="Pfam" id="PF02130">
    <property type="entry name" value="YbeY"/>
    <property type="match status" value="1"/>
</dbReference>
<dbReference type="SUPFAM" id="SSF55486">
    <property type="entry name" value="Metalloproteases ('zincins'), catalytic domain"/>
    <property type="match status" value="1"/>
</dbReference>
<dbReference type="PROSITE" id="PS01306">
    <property type="entry name" value="UPF0054"/>
    <property type="match status" value="1"/>
</dbReference>
<feature type="chain" id="PRO_0000284289" description="Endoribonuclease YbeY">
    <location>
        <begin position="1"/>
        <end position="167"/>
    </location>
</feature>
<feature type="region of interest" description="Disordered" evidence="2">
    <location>
        <begin position="64"/>
        <end position="101"/>
    </location>
</feature>
<feature type="compositionally biased region" description="Acidic residues" evidence="2">
    <location>
        <begin position="90"/>
        <end position="99"/>
    </location>
</feature>
<feature type="binding site" evidence="1">
    <location>
        <position position="131"/>
    </location>
    <ligand>
        <name>Zn(2+)</name>
        <dbReference type="ChEBI" id="CHEBI:29105"/>
        <note>catalytic</note>
    </ligand>
</feature>
<feature type="binding site" evidence="1">
    <location>
        <position position="135"/>
    </location>
    <ligand>
        <name>Zn(2+)</name>
        <dbReference type="ChEBI" id="CHEBI:29105"/>
        <note>catalytic</note>
    </ligand>
</feature>
<feature type="binding site" evidence="1">
    <location>
        <position position="141"/>
    </location>
    <ligand>
        <name>Zn(2+)</name>
        <dbReference type="ChEBI" id="CHEBI:29105"/>
        <note>catalytic</note>
    </ligand>
</feature>
<sequence>MEPLVETVIEDGRWEELDLPALATRAAEATLAALDMPAEGFTLVVMGCDDARIAELNGAFRQKGKPTNVLSWPSEERASEEPGMAPEPPEPGDPEDPEPLGDVAIAFETCQREAAEQGKPVTDHVTHLLVHGVLHLLGYDHVEEADGDLMEATETRILAGLGVPDPY</sequence>
<comment type="function">
    <text evidence="1">Single strand-specific metallo-endoribonuclease involved in late-stage 70S ribosome quality control and in maturation of the 3' terminus of the 16S rRNA.</text>
</comment>
<comment type="cofactor">
    <cofactor evidence="1">
        <name>Zn(2+)</name>
        <dbReference type="ChEBI" id="CHEBI:29105"/>
    </cofactor>
    <text evidence="1">Binds 1 zinc ion.</text>
</comment>
<comment type="subcellular location">
    <subcellularLocation>
        <location evidence="1">Cytoplasm</location>
    </subcellularLocation>
</comment>
<comment type="similarity">
    <text evidence="1">Belongs to the endoribonuclease YbeY family.</text>
</comment>
<name>YBEY_CERS4</name>
<proteinExistence type="inferred from homology"/>